<name>Y2724_PHOLL</name>
<gene>
    <name type="ordered locus">plu2724</name>
</gene>
<dbReference type="EMBL" id="BX571868">
    <property type="protein sequence ID" value="CAE15098.1"/>
    <property type="molecule type" value="Genomic_DNA"/>
</dbReference>
<dbReference type="RefSeq" id="WP_011146945.1">
    <property type="nucleotide sequence ID" value="NC_005126.1"/>
</dbReference>
<dbReference type="SMR" id="Q7N3J2"/>
<dbReference type="STRING" id="243265.plu2724"/>
<dbReference type="GeneID" id="48848985"/>
<dbReference type="KEGG" id="plu:plu2724"/>
<dbReference type="eggNOG" id="ENOG5032YJI">
    <property type="taxonomic scope" value="Bacteria"/>
</dbReference>
<dbReference type="HOGENOM" id="CLU_198936_0_0_6"/>
<dbReference type="OrthoDB" id="6522148at2"/>
<dbReference type="Proteomes" id="UP000002514">
    <property type="component" value="Chromosome"/>
</dbReference>
<dbReference type="GO" id="GO:0005886">
    <property type="term" value="C:plasma membrane"/>
    <property type="evidence" value="ECO:0007669"/>
    <property type="project" value="UniProtKB-SubCell"/>
</dbReference>
<dbReference type="HAMAP" id="MF_01566">
    <property type="entry name" value="UPF0370"/>
    <property type="match status" value="1"/>
</dbReference>
<dbReference type="InterPro" id="IPR020910">
    <property type="entry name" value="UPF0370"/>
</dbReference>
<dbReference type="NCBIfam" id="NF010185">
    <property type="entry name" value="PRK13664.1"/>
    <property type="match status" value="1"/>
</dbReference>
<dbReference type="Pfam" id="PF13980">
    <property type="entry name" value="UPF0370"/>
    <property type="match status" value="1"/>
</dbReference>
<comment type="subcellular location">
    <subcellularLocation>
        <location evidence="1">Cell membrane</location>
        <topology evidence="1">Single-pass membrane protein</topology>
    </subcellularLocation>
</comment>
<comment type="similarity">
    <text evidence="1">Belongs to the UPF0370 family.</text>
</comment>
<protein>
    <recommendedName>
        <fullName evidence="1">UPF0370 protein plu2724</fullName>
    </recommendedName>
</protein>
<organism>
    <name type="scientific">Photorhabdus laumondii subsp. laumondii (strain DSM 15139 / CIP 105565 / TT01)</name>
    <name type="common">Photorhabdus luminescens subsp. laumondii</name>
    <dbReference type="NCBI Taxonomy" id="243265"/>
    <lineage>
        <taxon>Bacteria</taxon>
        <taxon>Pseudomonadati</taxon>
        <taxon>Pseudomonadota</taxon>
        <taxon>Gammaproteobacteria</taxon>
        <taxon>Enterobacterales</taxon>
        <taxon>Morganellaceae</taxon>
        <taxon>Photorhabdus</taxon>
    </lineage>
</organism>
<reference key="1">
    <citation type="journal article" date="2003" name="Nat. Biotechnol.">
        <title>The genome sequence of the entomopathogenic bacterium Photorhabdus luminescens.</title>
        <authorList>
            <person name="Duchaud E."/>
            <person name="Rusniok C."/>
            <person name="Frangeul L."/>
            <person name="Buchrieser C."/>
            <person name="Givaudan A."/>
            <person name="Taourit S."/>
            <person name="Bocs S."/>
            <person name="Boursaux-Eude C."/>
            <person name="Chandler M."/>
            <person name="Charles J.-F."/>
            <person name="Dassa E."/>
            <person name="Derose R."/>
            <person name="Derzelle S."/>
            <person name="Freyssinet G."/>
            <person name="Gaudriault S."/>
            <person name="Medigue C."/>
            <person name="Lanois A."/>
            <person name="Powell K."/>
            <person name="Siguier P."/>
            <person name="Vincent R."/>
            <person name="Wingate V."/>
            <person name="Zouine M."/>
            <person name="Glaser P."/>
            <person name="Boemare N."/>
            <person name="Danchin A."/>
            <person name="Kunst F."/>
        </authorList>
    </citation>
    <scope>NUCLEOTIDE SEQUENCE [LARGE SCALE GENOMIC DNA]</scope>
    <source>
        <strain>DSM 15139 / CIP 105565 / TT01</strain>
    </source>
</reference>
<accession>Q7N3J2</accession>
<feature type="chain" id="PRO_0000244545" description="UPF0370 protein plu2724">
    <location>
        <begin position="1"/>
        <end position="62"/>
    </location>
</feature>
<feature type="transmembrane region" description="Helical" evidence="1">
    <location>
        <begin position="3"/>
        <end position="23"/>
    </location>
</feature>
<feature type="region of interest" description="Disordered" evidence="2">
    <location>
        <begin position="36"/>
        <end position="62"/>
    </location>
</feature>
<sequence length="62" mass="7567">MQWLADYWWIILILLVGVLLNAIKELRRLDVKKFLDNKPELPPHRDLNSKWDDEDDWPQKKP</sequence>
<proteinExistence type="inferred from homology"/>
<evidence type="ECO:0000255" key="1">
    <source>
        <dbReference type="HAMAP-Rule" id="MF_01566"/>
    </source>
</evidence>
<evidence type="ECO:0000256" key="2">
    <source>
        <dbReference type="SAM" id="MobiDB-lite"/>
    </source>
</evidence>
<keyword id="KW-1003">Cell membrane</keyword>
<keyword id="KW-0472">Membrane</keyword>
<keyword id="KW-1185">Reference proteome</keyword>
<keyword id="KW-0812">Transmembrane</keyword>
<keyword id="KW-1133">Transmembrane helix</keyword>